<gene>
    <name evidence="1" type="primary">atpH</name>
    <name type="ordered locus">A2cp1_4506</name>
</gene>
<organism>
    <name type="scientific">Anaeromyxobacter dehalogenans (strain 2CP-1 / ATCC BAA-258)</name>
    <dbReference type="NCBI Taxonomy" id="455488"/>
    <lineage>
        <taxon>Bacteria</taxon>
        <taxon>Pseudomonadati</taxon>
        <taxon>Myxococcota</taxon>
        <taxon>Myxococcia</taxon>
        <taxon>Myxococcales</taxon>
        <taxon>Cystobacterineae</taxon>
        <taxon>Anaeromyxobacteraceae</taxon>
        <taxon>Anaeromyxobacter</taxon>
    </lineage>
</organism>
<keyword id="KW-0066">ATP synthesis</keyword>
<keyword id="KW-0997">Cell inner membrane</keyword>
<keyword id="KW-1003">Cell membrane</keyword>
<keyword id="KW-0139">CF(1)</keyword>
<keyword id="KW-0375">Hydrogen ion transport</keyword>
<keyword id="KW-0406">Ion transport</keyword>
<keyword id="KW-0472">Membrane</keyword>
<keyword id="KW-0813">Transport</keyword>
<accession>B8JCV3</accession>
<reference key="1">
    <citation type="submission" date="2009-01" db="EMBL/GenBank/DDBJ databases">
        <title>Complete sequence of Anaeromyxobacter dehalogenans 2CP-1.</title>
        <authorList>
            <person name="Lucas S."/>
            <person name="Copeland A."/>
            <person name="Lapidus A."/>
            <person name="Glavina del Rio T."/>
            <person name="Dalin E."/>
            <person name="Tice H."/>
            <person name="Bruce D."/>
            <person name="Goodwin L."/>
            <person name="Pitluck S."/>
            <person name="Saunders E."/>
            <person name="Brettin T."/>
            <person name="Detter J.C."/>
            <person name="Han C."/>
            <person name="Larimer F."/>
            <person name="Land M."/>
            <person name="Hauser L."/>
            <person name="Kyrpides N."/>
            <person name="Ovchinnikova G."/>
            <person name="Beliaev A.S."/>
            <person name="Richardson P."/>
        </authorList>
    </citation>
    <scope>NUCLEOTIDE SEQUENCE [LARGE SCALE GENOMIC DNA]</scope>
    <source>
        <strain>2CP-1 / ATCC BAA-258</strain>
    </source>
</reference>
<proteinExistence type="inferred from homology"/>
<comment type="function">
    <text evidence="1">F(1)F(0) ATP synthase produces ATP from ADP in the presence of a proton or sodium gradient. F-type ATPases consist of two structural domains, F(1) containing the extramembraneous catalytic core and F(0) containing the membrane proton channel, linked together by a central stalk and a peripheral stalk. During catalysis, ATP synthesis in the catalytic domain of F(1) is coupled via a rotary mechanism of the central stalk subunits to proton translocation.</text>
</comment>
<comment type="function">
    <text evidence="1">This protein is part of the stalk that links CF(0) to CF(1). It either transmits conformational changes from CF(0) to CF(1) or is implicated in proton conduction.</text>
</comment>
<comment type="subunit">
    <text evidence="1">F-type ATPases have 2 components, F(1) - the catalytic core - and F(0) - the membrane proton channel. F(1) has five subunits: alpha(3), beta(3), gamma(1), delta(1), epsilon(1). F(0) has three main subunits: a(1), b(2) and c(10-14). The alpha and beta chains form an alternating ring which encloses part of the gamma chain. F(1) is attached to F(0) by a central stalk formed by the gamma and epsilon chains, while a peripheral stalk is formed by the delta and b chains.</text>
</comment>
<comment type="subcellular location">
    <subcellularLocation>
        <location evidence="1">Cell inner membrane</location>
        <topology evidence="1">Peripheral membrane protein</topology>
    </subcellularLocation>
</comment>
<comment type="similarity">
    <text evidence="1">Belongs to the ATPase delta chain family.</text>
</comment>
<protein>
    <recommendedName>
        <fullName evidence="1">ATP synthase subunit delta</fullName>
    </recommendedName>
    <alternativeName>
        <fullName evidence="1">ATP synthase F(1) sector subunit delta</fullName>
    </alternativeName>
    <alternativeName>
        <fullName evidence="1">F-type ATPase subunit delta</fullName>
        <shortName evidence="1">F-ATPase subunit delta</shortName>
    </alternativeName>
</protein>
<dbReference type="EMBL" id="CP001359">
    <property type="protein sequence ID" value="ACL67823.1"/>
    <property type="molecule type" value="Genomic_DNA"/>
</dbReference>
<dbReference type="RefSeq" id="WP_015935500.1">
    <property type="nucleotide sequence ID" value="NC_011891.1"/>
</dbReference>
<dbReference type="SMR" id="B8JCV3"/>
<dbReference type="KEGG" id="acp:A2cp1_4506"/>
<dbReference type="HOGENOM" id="CLU_085114_1_1_7"/>
<dbReference type="Proteomes" id="UP000007089">
    <property type="component" value="Chromosome"/>
</dbReference>
<dbReference type="GO" id="GO:0005886">
    <property type="term" value="C:plasma membrane"/>
    <property type="evidence" value="ECO:0007669"/>
    <property type="project" value="UniProtKB-SubCell"/>
</dbReference>
<dbReference type="GO" id="GO:0045259">
    <property type="term" value="C:proton-transporting ATP synthase complex"/>
    <property type="evidence" value="ECO:0007669"/>
    <property type="project" value="UniProtKB-KW"/>
</dbReference>
<dbReference type="GO" id="GO:0046933">
    <property type="term" value="F:proton-transporting ATP synthase activity, rotational mechanism"/>
    <property type="evidence" value="ECO:0007669"/>
    <property type="project" value="UniProtKB-UniRule"/>
</dbReference>
<dbReference type="Gene3D" id="1.10.520.20">
    <property type="entry name" value="N-terminal domain of the delta subunit of the F1F0-ATP synthase"/>
    <property type="match status" value="1"/>
</dbReference>
<dbReference type="HAMAP" id="MF_01416">
    <property type="entry name" value="ATP_synth_delta_bact"/>
    <property type="match status" value="1"/>
</dbReference>
<dbReference type="InterPro" id="IPR026015">
    <property type="entry name" value="ATP_synth_OSCP/delta_N_sf"/>
</dbReference>
<dbReference type="InterPro" id="IPR000711">
    <property type="entry name" value="ATPase_OSCP/dsu"/>
</dbReference>
<dbReference type="NCBIfam" id="TIGR01145">
    <property type="entry name" value="ATP_synt_delta"/>
    <property type="match status" value="1"/>
</dbReference>
<dbReference type="NCBIfam" id="NF004402">
    <property type="entry name" value="PRK05758.2-2"/>
    <property type="match status" value="1"/>
</dbReference>
<dbReference type="PANTHER" id="PTHR11910">
    <property type="entry name" value="ATP SYNTHASE DELTA CHAIN"/>
    <property type="match status" value="1"/>
</dbReference>
<dbReference type="Pfam" id="PF00213">
    <property type="entry name" value="OSCP"/>
    <property type="match status" value="1"/>
</dbReference>
<dbReference type="PRINTS" id="PR00125">
    <property type="entry name" value="ATPASEDELTA"/>
</dbReference>
<dbReference type="SUPFAM" id="SSF47928">
    <property type="entry name" value="N-terminal domain of the delta subunit of the F1F0-ATP synthase"/>
    <property type="match status" value="1"/>
</dbReference>
<feature type="chain" id="PRO_0000370879" description="ATP synthase subunit delta">
    <location>
        <begin position="1"/>
        <end position="179"/>
    </location>
</feature>
<evidence type="ECO:0000255" key="1">
    <source>
        <dbReference type="HAMAP-Rule" id="MF_01416"/>
    </source>
</evidence>
<name>ATPD_ANAD2</name>
<sequence length="179" mass="19589">MLMGSIARRYARALFSLAVEQGRVEPWNDALQVLKNAVEGSPDLRDVLSNPVYSKEQRRAIVEKLASALKLEREPANLLFLLGDRNRLAYLAAVVDTFRSLADQHLGRLRARVTSAVPLDASAAQAIADRLSKATNAKVLLDRAVDPSLLGGVIAQVGSLVYDGSVRTQLEDLRKTLKQ</sequence>